<name>RL9_SALG2</name>
<dbReference type="EMBL" id="AM933173">
    <property type="protein sequence ID" value="CAR39999.1"/>
    <property type="molecule type" value="Genomic_DNA"/>
</dbReference>
<dbReference type="RefSeq" id="WP_001196059.1">
    <property type="nucleotide sequence ID" value="NC_011274.1"/>
</dbReference>
<dbReference type="SMR" id="B5R9F1"/>
<dbReference type="KEGG" id="seg:SG4236"/>
<dbReference type="HOGENOM" id="CLU_078938_4_1_6"/>
<dbReference type="Proteomes" id="UP000008321">
    <property type="component" value="Chromosome"/>
</dbReference>
<dbReference type="GO" id="GO:1990904">
    <property type="term" value="C:ribonucleoprotein complex"/>
    <property type="evidence" value="ECO:0007669"/>
    <property type="project" value="UniProtKB-KW"/>
</dbReference>
<dbReference type="GO" id="GO:0005840">
    <property type="term" value="C:ribosome"/>
    <property type="evidence" value="ECO:0007669"/>
    <property type="project" value="UniProtKB-KW"/>
</dbReference>
<dbReference type="GO" id="GO:0019843">
    <property type="term" value="F:rRNA binding"/>
    <property type="evidence" value="ECO:0007669"/>
    <property type="project" value="UniProtKB-UniRule"/>
</dbReference>
<dbReference type="GO" id="GO:0003735">
    <property type="term" value="F:structural constituent of ribosome"/>
    <property type="evidence" value="ECO:0007669"/>
    <property type="project" value="InterPro"/>
</dbReference>
<dbReference type="GO" id="GO:0006412">
    <property type="term" value="P:translation"/>
    <property type="evidence" value="ECO:0007669"/>
    <property type="project" value="UniProtKB-UniRule"/>
</dbReference>
<dbReference type="FunFam" id="3.10.430.100:FF:000001">
    <property type="entry name" value="50S ribosomal protein L9"/>
    <property type="match status" value="1"/>
</dbReference>
<dbReference type="FunFam" id="3.40.5.10:FF:000001">
    <property type="entry name" value="50S ribosomal protein L9"/>
    <property type="match status" value="1"/>
</dbReference>
<dbReference type="Gene3D" id="3.10.430.100">
    <property type="entry name" value="Ribosomal protein L9, C-terminal domain"/>
    <property type="match status" value="1"/>
</dbReference>
<dbReference type="Gene3D" id="3.40.5.10">
    <property type="entry name" value="Ribosomal protein L9, N-terminal domain"/>
    <property type="match status" value="1"/>
</dbReference>
<dbReference type="HAMAP" id="MF_00503">
    <property type="entry name" value="Ribosomal_bL9"/>
    <property type="match status" value="1"/>
</dbReference>
<dbReference type="InterPro" id="IPR000244">
    <property type="entry name" value="Ribosomal_bL9"/>
</dbReference>
<dbReference type="InterPro" id="IPR009027">
    <property type="entry name" value="Ribosomal_bL9/RNase_H1_N"/>
</dbReference>
<dbReference type="InterPro" id="IPR020594">
    <property type="entry name" value="Ribosomal_bL9_bac/chp"/>
</dbReference>
<dbReference type="InterPro" id="IPR020069">
    <property type="entry name" value="Ribosomal_bL9_C"/>
</dbReference>
<dbReference type="InterPro" id="IPR036791">
    <property type="entry name" value="Ribosomal_bL9_C_sf"/>
</dbReference>
<dbReference type="InterPro" id="IPR020070">
    <property type="entry name" value="Ribosomal_bL9_N"/>
</dbReference>
<dbReference type="InterPro" id="IPR036935">
    <property type="entry name" value="Ribosomal_bL9_N_sf"/>
</dbReference>
<dbReference type="NCBIfam" id="TIGR00158">
    <property type="entry name" value="L9"/>
    <property type="match status" value="1"/>
</dbReference>
<dbReference type="PANTHER" id="PTHR21368">
    <property type="entry name" value="50S RIBOSOMAL PROTEIN L9"/>
    <property type="match status" value="1"/>
</dbReference>
<dbReference type="Pfam" id="PF03948">
    <property type="entry name" value="Ribosomal_L9_C"/>
    <property type="match status" value="1"/>
</dbReference>
<dbReference type="Pfam" id="PF01281">
    <property type="entry name" value="Ribosomal_L9_N"/>
    <property type="match status" value="1"/>
</dbReference>
<dbReference type="SUPFAM" id="SSF55658">
    <property type="entry name" value="L9 N-domain-like"/>
    <property type="match status" value="1"/>
</dbReference>
<dbReference type="SUPFAM" id="SSF55653">
    <property type="entry name" value="Ribosomal protein L9 C-domain"/>
    <property type="match status" value="1"/>
</dbReference>
<dbReference type="PROSITE" id="PS00651">
    <property type="entry name" value="RIBOSOMAL_L9"/>
    <property type="match status" value="1"/>
</dbReference>
<comment type="function">
    <text evidence="1">Binds to the 23S rRNA.</text>
</comment>
<comment type="similarity">
    <text evidence="1">Belongs to the bacterial ribosomal protein bL9 family.</text>
</comment>
<reference key="1">
    <citation type="journal article" date="2008" name="Genome Res.">
        <title>Comparative genome analysis of Salmonella enteritidis PT4 and Salmonella gallinarum 287/91 provides insights into evolutionary and host adaptation pathways.</title>
        <authorList>
            <person name="Thomson N.R."/>
            <person name="Clayton D.J."/>
            <person name="Windhorst D."/>
            <person name="Vernikos G."/>
            <person name="Davidson S."/>
            <person name="Churcher C."/>
            <person name="Quail M.A."/>
            <person name="Stevens M."/>
            <person name="Jones M.A."/>
            <person name="Watson M."/>
            <person name="Barron A."/>
            <person name="Layton A."/>
            <person name="Pickard D."/>
            <person name="Kingsley R.A."/>
            <person name="Bignell A."/>
            <person name="Clark L."/>
            <person name="Harris B."/>
            <person name="Ormond D."/>
            <person name="Abdellah Z."/>
            <person name="Brooks K."/>
            <person name="Cherevach I."/>
            <person name="Chillingworth T."/>
            <person name="Woodward J."/>
            <person name="Norberczak H."/>
            <person name="Lord A."/>
            <person name="Arrowsmith C."/>
            <person name="Jagels K."/>
            <person name="Moule S."/>
            <person name="Mungall K."/>
            <person name="Saunders M."/>
            <person name="Whitehead S."/>
            <person name="Chabalgoity J.A."/>
            <person name="Maskell D."/>
            <person name="Humphreys T."/>
            <person name="Roberts M."/>
            <person name="Barrow P.A."/>
            <person name="Dougan G."/>
            <person name="Parkhill J."/>
        </authorList>
    </citation>
    <scope>NUCLEOTIDE SEQUENCE [LARGE SCALE GENOMIC DNA]</scope>
    <source>
        <strain>287/91 / NCTC 13346</strain>
    </source>
</reference>
<feature type="chain" id="PRO_1000126966" description="Large ribosomal subunit protein bL9">
    <location>
        <begin position="1"/>
        <end position="149"/>
    </location>
</feature>
<protein>
    <recommendedName>
        <fullName evidence="1">Large ribosomal subunit protein bL9</fullName>
    </recommendedName>
    <alternativeName>
        <fullName evidence="2">50S ribosomal protein L9</fullName>
    </alternativeName>
</protein>
<organism>
    <name type="scientific">Salmonella gallinarum (strain 287/91 / NCTC 13346)</name>
    <dbReference type="NCBI Taxonomy" id="550538"/>
    <lineage>
        <taxon>Bacteria</taxon>
        <taxon>Pseudomonadati</taxon>
        <taxon>Pseudomonadota</taxon>
        <taxon>Gammaproteobacteria</taxon>
        <taxon>Enterobacterales</taxon>
        <taxon>Enterobacteriaceae</taxon>
        <taxon>Salmonella</taxon>
    </lineage>
</organism>
<accession>B5R9F1</accession>
<keyword id="KW-0687">Ribonucleoprotein</keyword>
<keyword id="KW-0689">Ribosomal protein</keyword>
<keyword id="KW-0694">RNA-binding</keyword>
<keyword id="KW-0699">rRNA-binding</keyword>
<sequence length="149" mass="15784">MQVILLDKVANLGSLGDQVNVKAGYARNFLVPKGKAVPATKKNVEYFEARRAELEAKLADVLAAANARAEKINALETVTIASKAGDEGKLFGSIGTRDIADAVTAAGVDVAKSEVRLPNGVLRTTGEHEVNFQVHSEVFAKVIINVVAE</sequence>
<proteinExistence type="inferred from homology"/>
<gene>
    <name evidence="1" type="primary">rplI</name>
    <name type="ordered locus">SG4236</name>
</gene>
<evidence type="ECO:0000255" key="1">
    <source>
        <dbReference type="HAMAP-Rule" id="MF_00503"/>
    </source>
</evidence>
<evidence type="ECO:0000305" key="2"/>